<proteinExistence type="inferred from homology"/>
<comment type="function">
    <text evidence="1">Catalyzes the reversible conversion of ribose-5-phosphate to ribulose 5-phosphate.</text>
</comment>
<comment type="catalytic activity">
    <reaction evidence="1">
        <text>aldehydo-D-ribose 5-phosphate = D-ribulose 5-phosphate</text>
        <dbReference type="Rhea" id="RHEA:14657"/>
        <dbReference type="ChEBI" id="CHEBI:58121"/>
        <dbReference type="ChEBI" id="CHEBI:58273"/>
        <dbReference type="EC" id="5.3.1.6"/>
    </reaction>
</comment>
<comment type="pathway">
    <text evidence="1">Carbohydrate degradation; pentose phosphate pathway; D-ribose 5-phosphate from D-ribulose 5-phosphate (non-oxidative stage): step 1/1.</text>
</comment>
<comment type="subunit">
    <text evidence="1">Homodimer.</text>
</comment>
<comment type="similarity">
    <text evidence="1">Belongs to the ribose 5-phosphate isomerase family.</text>
</comment>
<evidence type="ECO:0000255" key="1">
    <source>
        <dbReference type="HAMAP-Rule" id="MF_00170"/>
    </source>
</evidence>
<gene>
    <name evidence="1" type="primary">rpiA</name>
    <name type="ordered locus">RSKD131_1688</name>
</gene>
<accession>B9KKA1</accession>
<keyword id="KW-0413">Isomerase</keyword>
<feature type="chain" id="PRO_1000194718" description="Ribose-5-phosphate isomerase A">
    <location>
        <begin position="1"/>
        <end position="262"/>
    </location>
</feature>
<feature type="active site" description="Proton acceptor" evidence="1">
    <location>
        <position position="111"/>
    </location>
</feature>
<feature type="binding site" evidence="1">
    <location>
        <begin position="33"/>
        <end position="36"/>
    </location>
    <ligand>
        <name>substrate</name>
    </ligand>
</feature>
<feature type="binding site" evidence="1">
    <location>
        <begin position="89"/>
        <end position="92"/>
    </location>
    <ligand>
        <name>substrate</name>
    </ligand>
</feature>
<feature type="binding site" evidence="1">
    <location>
        <begin position="102"/>
        <end position="105"/>
    </location>
    <ligand>
        <name>substrate</name>
    </ligand>
</feature>
<feature type="binding site" evidence="1">
    <location>
        <position position="129"/>
    </location>
    <ligand>
        <name>substrate</name>
    </ligand>
</feature>
<reference key="1">
    <citation type="journal article" date="2009" name="J. Bacteriol.">
        <title>Complete genome sequence of Rhodobacter sphaeroides KD131.</title>
        <authorList>
            <person name="Lim S.-K."/>
            <person name="Kim S.J."/>
            <person name="Cha S.H."/>
            <person name="Oh Y.-K."/>
            <person name="Rhee H.-J."/>
            <person name="Kim M.-S."/>
            <person name="Lee J.K."/>
        </authorList>
    </citation>
    <scope>NUCLEOTIDE SEQUENCE [LARGE SCALE GENOMIC DNA]</scope>
    <source>
        <strain>KD131 / KCTC 12085</strain>
    </source>
</reference>
<sequence length="262" mass="28203">MPAELSPIDTAKFAAARRAVDLVQDGMKLGLGTGSTAAWMVRCLAERVREEGLRVQGVPTSTRTAELARALGIQVVTLDEAKWLDLTIDGADEFDADFNLIKGGGAALLQEKIVATASDRMVVIADAAKEVAHLGAFPLPVEVIPFGWQSTKMLIEETLEGMDVLGREVTLRLSGDAPLLTDEKNYILDLHLKRIGEPRKLGLALNQIAGVVENGLFIDICDTVVVGHGDGRVSLRDLQSGQAEEGFIDMDRARNIFADLGD</sequence>
<organism>
    <name type="scientific">Cereibacter sphaeroides (strain KD131 / KCTC 12085)</name>
    <name type="common">Rhodobacter sphaeroides</name>
    <dbReference type="NCBI Taxonomy" id="557760"/>
    <lineage>
        <taxon>Bacteria</taxon>
        <taxon>Pseudomonadati</taxon>
        <taxon>Pseudomonadota</taxon>
        <taxon>Alphaproteobacteria</taxon>
        <taxon>Rhodobacterales</taxon>
        <taxon>Paracoccaceae</taxon>
        <taxon>Cereibacter</taxon>
    </lineage>
</organism>
<protein>
    <recommendedName>
        <fullName evidence="1">Ribose-5-phosphate isomerase A</fullName>
        <ecNumber evidence="1">5.3.1.6</ecNumber>
    </recommendedName>
    <alternativeName>
        <fullName evidence="1">Phosphoriboisomerase A</fullName>
        <shortName evidence="1">PRI</shortName>
    </alternativeName>
</protein>
<dbReference type="EC" id="5.3.1.6" evidence="1"/>
<dbReference type="EMBL" id="CP001150">
    <property type="protein sequence ID" value="ACM01548.1"/>
    <property type="molecule type" value="Genomic_DNA"/>
</dbReference>
<dbReference type="RefSeq" id="WP_015920904.1">
    <property type="nucleotide sequence ID" value="NC_011963.1"/>
</dbReference>
<dbReference type="SMR" id="B9KKA1"/>
<dbReference type="GeneID" id="67447093"/>
<dbReference type="KEGG" id="rsk:RSKD131_1688"/>
<dbReference type="HOGENOM" id="CLU_056590_1_0_5"/>
<dbReference type="UniPathway" id="UPA00115">
    <property type="reaction ID" value="UER00412"/>
</dbReference>
<dbReference type="GO" id="GO:0005829">
    <property type="term" value="C:cytosol"/>
    <property type="evidence" value="ECO:0007669"/>
    <property type="project" value="TreeGrafter"/>
</dbReference>
<dbReference type="GO" id="GO:0004751">
    <property type="term" value="F:ribose-5-phosphate isomerase activity"/>
    <property type="evidence" value="ECO:0007669"/>
    <property type="project" value="UniProtKB-UniRule"/>
</dbReference>
<dbReference type="GO" id="GO:0006014">
    <property type="term" value="P:D-ribose metabolic process"/>
    <property type="evidence" value="ECO:0007669"/>
    <property type="project" value="TreeGrafter"/>
</dbReference>
<dbReference type="GO" id="GO:0009052">
    <property type="term" value="P:pentose-phosphate shunt, non-oxidative branch"/>
    <property type="evidence" value="ECO:0007669"/>
    <property type="project" value="UniProtKB-UniRule"/>
</dbReference>
<dbReference type="CDD" id="cd01398">
    <property type="entry name" value="RPI_A"/>
    <property type="match status" value="1"/>
</dbReference>
<dbReference type="FunFam" id="3.40.50.1360:FF:000001">
    <property type="entry name" value="Ribose-5-phosphate isomerase A"/>
    <property type="match status" value="1"/>
</dbReference>
<dbReference type="Gene3D" id="3.30.70.260">
    <property type="match status" value="1"/>
</dbReference>
<dbReference type="Gene3D" id="3.40.50.1360">
    <property type="match status" value="1"/>
</dbReference>
<dbReference type="HAMAP" id="MF_00170">
    <property type="entry name" value="Rib_5P_isom_A"/>
    <property type="match status" value="1"/>
</dbReference>
<dbReference type="InterPro" id="IPR037171">
    <property type="entry name" value="NagB/RpiA_transferase-like"/>
</dbReference>
<dbReference type="InterPro" id="IPR020672">
    <property type="entry name" value="Ribose5P_isomerase_typA_subgr"/>
</dbReference>
<dbReference type="InterPro" id="IPR004788">
    <property type="entry name" value="Ribose5P_isomerase_type_A"/>
</dbReference>
<dbReference type="NCBIfam" id="NF001924">
    <property type="entry name" value="PRK00702.1"/>
    <property type="match status" value="1"/>
</dbReference>
<dbReference type="NCBIfam" id="TIGR00021">
    <property type="entry name" value="rpiA"/>
    <property type="match status" value="1"/>
</dbReference>
<dbReference type="PANTHER" id="PTHR11934">
    <property type="entry name" value="RIBOSE-5-PHOSPHATE ISOMERASE"/>
    <property type="match status" value="1"/>
</dbReference>
<dbReference type="PANTHER" id="PTHR11934:SF0">
    <property type="entry name" value="RIBOSE-5-PHOSPHATE ISOMERASE"/>
    <property type="match status" value="1"/>
</dbReference>
<dbReference type="Pfam" id="PF06026">
    <property type="entry name" value="Rib_5-P_isom_A"/>
    <property type="match status" value="1"/>
</dbReference>
<dbReference type="SUPFAM" id="SSF75445">
    <property type="entry name" value="D-ribose-5-phosphate isomerase (RpiA), lid domain"/>
    <property type="match status" value="1"/>
</dbReference>
<dbReference type="SUPFAM" id="SSF100950">
    <property type="entry name" value="NagB/RpiA/CoA transferase-like"/>
    <property type="match status" value="1"/>
</dbReference>
<name>RPIA_CERSK</name>